<keyword id="KW-0963">Cytoplasm</keyword>
<keyword id="KW-0324">Glycolysis</keyword>
<keyword id="KW-0456">Lyase</keyword>
<keyword id="KW-0460">Magnesium</keyword>
<keyword id="KW-0479">Metal-binding</keyword>
<keyword id="KW-0964">Secreted</keyword>
<reference key="1">
    <citation type="journal article" date="2008" name="PLoS ONE">
        <title>Comparative analysis of Acinetobacters: three genomes for three lifestyles.</title>
        <authorList>
            <person name="Vallenet D."/>
            <person name="Nordmann P."/>
            <person name="Barbe V."/>
            <person name="Poirel L."/>
            <person name="Mangenot S."/>
            <person name="Bataille E."/>
            <person name="Dossat C."/>
            <person name="Gas S."/>
            <person name="Kreimeyer A."/>
            <person name="Lenoble P."/>
            <person name="Oztas S."/>
            <person name="Poulain J."/>
            <person name="Segurens B."/>
            <person name="Robert C."/>
            <person name="Abergel C."/>
            <person name="Claverie J.-M."/>
            <person name="Raoult D."/>
            <person name="Medigue C."/>
            <person name="Weissenbach J."/>
            <person name="Cruveiller S."/>
        </authorList>
    </citation>
    <scope>NUCLEOTIDE SEQUENCE [LARGE SCALE GENOMIC DNA]</scope>
    <source>
        <strain>SDF</strain>
    </source>
</reference>
<organism>
    <name type="scientific">Acinetobacter baumannii (strain SDF)</name>
    <dbReference type="NCBI Taxonomy" id="509170"/>
    <lineage>
        <taxon>Bacteria</taxon>
        <taxon>Pseudomonadati</taxon>
        <taxon>Pseudomonadota</taxon>
        <taxon>Gammaproteobacteria</taxon>
        <taxon>Moraxellales</taxon>
        <taxon>Moraxellaceae</taxon>
        <taxon>Acinetobacter</taxon>
        <taxon>Acinetobacter calcoaceticus/baumannii complex</taxon>
    </lineage>
</organism>
<protein>
    <recommendedName>
        <fullName evidence="1">Enolase</fullName>
        <ecNumber evidence="1">4.2.1.11</ecNumber>
    </recommendedName>
    <alternativeName>
        <fullName evidence="1">2-phospho-D-glycerate hydro-lyase</fullName>
    </alternativeName>
    <alternativeName>
        <fullName evidence="1">2-phosphoglycerate dehydratase</fullName>
    </alternativeName>
</protein>
<name>ENO_ACIBS</name>
<evidence type="ECO:0000255" key="1">
    <source>
        <dbReference type="HAMAP-Rule" id="MF_00318"/>
    </source>
</evidence>
<gene>
    <name evidence="1" type="primary">eno</name>
    <name type="ordered locus">ABSDF2032</name>
</gene>
<accession>B0VQI4</accession>
<comment type="function">
    <text evidence="1">Catalyzes the reversible conversion of 2-phosphoglycerate (2-PG) into phosphoenolpyruvate (PEP). It is essential for the degradation of carbohydrates via glycolysis.</text>
</comment>
<comment type="catalytic activity">
    <reaction evidence="1">
        <text>(2R)-2-phosphoglycerate = phosphoenolpyruvate + H2O</text>
        <dbReference type="Rhea" id="RHEA:10164"/>
        <dbReference type="ChEBI" id="CHEBI:15377"/>
        <dbReference type="ChEBI" id="CHEBI:58289"/>
        <dbReference type="ChEBI" id="CHEBI:58702"/>
        <dbReference type="EC" id="4.2.1.11"/>
    </reaction>
</comment>
<comment type="cofactor">
    <cofactor evidence="1">
        <name>Mg(2+)</name>
        <dbReference type="ChEBI" id="CHEBI:18420"/>
    </cofactor>
    <text evidence="1">Binds a second Mg(2+) ion via substrate during catalysis.</text>
</comment>
<comment type="pathway">
    <text evidence="1">Carbohydrate degradation; glycolysis; pyruvate from D-glyceraldehyde 3-phosphate: step 4/5.</text>
</comment>
<comment type="subunit">
    <text evidence="1">Component of the RNA degradosome, a multiprotein complex involved in RNA processing and mRNA degradation.</text>
</comment>
<comment type="subcellular location">
    <subcellularLocation>
        <location evidence="1">Cytoplasm</location>
    </subcellularLocation>
    <subcellularLocation>
        <location evidence="1">Secreted</location>
    </subcellularLocation>
    <subcellularLocation>
        <location evidence="1">Cell surface</location>
    </subcellularLocation>
    <text evidence="1">Fractions of enolase are present in both the cytoplasm and on the cell surface.</text>
</comment>
<comment type="similarity">
    <text evidence="1">Belongs to the enolase family.</text>
</comment>
<feature type="chain" id="PRO_1000115818" description="Enolase">
    <location>
        <begin position="1"/>
        <end position="431"/>
    </location>
</feature>
<feature type="active site" description="Proton donor" evidence="1">
    <location>
        <position position="210"/>
    </location>
</feature>
<feature type="active site" description="Proton acceptor" evidence="1">
    <location>
        <position position="343"/>
    </location>
</feature>
<feature type="binding site" evidence="1">
    <location>
        <position position="168"/>
    </location>
    <ligand>
        <name>(2R)-2-phosphoglycerate</name>
        <dbReference type="ChEBI" id="CHEBI:58289"/>
    </ligand>
</feature>
<feature type="binding site" evidence="1">
    <location>
        <position position="247"/>
    </location>
    <ligand>
        <name>Mg(2+)</name>
        <dbReference type="ChEBI" id="CHEBI:18420"/>
    </ligand>
</feature>
<feature type="binding site" evidence="1">
    <location>
        <position position="291"/>
    </location>
    <ligand>
        <name>Mg(2+)</name>
        <dbReference type="ChEBI" id="CHEBI:18420"/>
    </ligand>
</feature>
<feature type="binding site" evidence="1">
    <location>
        <position position="318"/>
    </location>
    <ligand>
        <name>Mg(2+)</name>
        <dbReference type="ChEBI" id="CHEBI:18420"/>
    </ligand>
</feature>
<feature type="binding site" evidence="1">
    <location>
        <position position="343"/>
    </location>
    <ligand>
        <name>(2R)-2-phosphoglycerate</name>
        <dbReference type="ChEBI" id="CHEBI:58289"/>
    </ligand>
</feature>
<feature type="binding site" evidence="1">
    <location>
        <position position="372"/>
    </location>
    <ligand>
        <name>(2R)-2-phosphoglycerate</name>
        <dbReference type="ChEBI" id="CHEBI:58289"/>
    </ligand>
</feature>
<feature type="binding site" evidence="1">
    <location>
        <position position="373"/>
    </location>
    <ligand>
        <name>(2R)-2-phosphoglycerate</name>
        <dbReference type="ChEBI" id="CHEBI:58289"/>
    </ligand>
</feature>
<feature type="binding site" evidence="1">
    <location>
        <position position="394"/>
    </location>
    <ligand>
        <name>(2R)-2-phosphoglycerate</name>
        <dbReference type="ChEBI" id="CHEBI:58289"/>
    </ligand>
</feature>
<proteinExistence type="inferred from homology"/>
<dbReference type="EC" id="4.2.1.11" evidence="1"/>
<dbReference type="EMBL" id="CU468230">
    <property type="protein sequence ID" value="CAP01363.1"/>
    <property type="molecule type" value="Genomic_DNA"/>
</dbReference>
<dbReference type="SMR" id="B0VQI4"/>
<dbReference type="KEGG" id="abm:ABSDF2032"/>
<dbReference type="HOGENOM" id="CLU_031223_2_1_6"/>
<dbReference type="UniPathway" id="UPA00109">
    <property type="reaction ID" value="UER00187"/>
</dbReference>
<dbReference type="Proteomes" id="UP000001741">
    <property type="component" value="Chromosome"/>
</dbReference>
<dbReference type="GO" id="GO:0009986">
    <property type="term" value="C:cell surface"/>
    <property type="evidence" value="ECO:0007669"/>
    <property type="project" value="UniProtKB-SubCell"/>
</dbReference>
<dbReference type="GO" id="GO:0005576">
    <property type="term" value="C:extracellular region"/>
    <property type="evidence" value="ECO:0007669"/>
    <property type="project" value="UniProtKB-SubCell"/>
</dbReference>
<dbReference type="GO" id="GO:0000015">
    <property type="term" value="C:phosphopyruvate hydratase complex"/>
    <property type="evidence" value="ECO:0007669"/>
    <property type="project" value="InterPro"/>
</dbReference>
<dbReference type="GO" id="GO:0000287">
    <property type="term" value="F:magnesium ion binding"/>
    <property type="evidence" value="ECO:0007669"/>
    <property type="project" value="UniProtKB-UniRule"/>
</dbReference>
<dbReference type="GO" id="GO:0004634">
    <property type="term" value="F:phosphopyruvate hydratase activity"/>
    <property type="evidence" value="ECO:0007669"/>
    <property type="project" value="UniProtKB-UniRule"/>
</dbReference>
<dbReference type="GO" id="GO:0006096">
    <property type="term" value="P:glycolytic process"/>
    <property type="evidence" value="ECO:0007669"/>
    <property type="project" value="UniProtKB-UniRule"/>
</dbReference>
<dbReference type="CDD" id="cd03313">
    <property type="entry name" value="enolase"/>
    <property type="match status" value="1"/>
</dbReference>
<dbReference type="FunFam" id="3.20.20.120:FF:000001">
    <property type="entry name" value="Enolase"/>
    <property type="match status" value="1"/>
</dbReference>
<dbReference type="FunFam" id="3.30.390.10:FF:000001">
    <property type="entry name" value="Enolase"/>
    <property type="match status" value="1"/>
</dbReference>
<dbReference type="Gene3D" id="3.20.20.120">
    <property type="entry name" value="Enolase-like C-terminal domain"/>
    <property type="match status" value="1"/>
</dbReference>
<dbReference type="Gene3D" id="3.30.390.10">
    <property type="entry name" value="Enolase-like, N-terminal domain"/>
    <property type="match status" value="1"/>
</dbReference>
<dbReference type="HAMAP" id="MF_00318">
    <property type="entry name" value="Enolase"/>
    <property type="match status" value="1"/>
</dbReference>
<dbReference type="InterPro" id="IPR000941">
    <property type="entry name" value="Enolase"/>
</dbReference>
<dbReference type="InterPro" id="IPR036849">
    <property type="entry name" value="Enolase-like_C_sf"/>
</dbReference>
<dbReference type="InterPro" id="IPR029017">
    <property type="entry name" value="Enolase-like_N"/>
</dbReference>
<dbReference type="InterPro" id="IPR020810">
    <property type="entry name" value="Enolase_C"/>
</dbReference>
<dbReference type="InterPro" id="IPR020809">
    <property type="entry name" value="Enolase_CS"/>
</dbReference>
<dbReference type="InterPro" id="IPR020811">
    <property type="entry name" value="Enolase_N"/>
</dbReference>
<dbReference type="NCBIfam" id="TIGR01060">
    <property type="entry name" value="eno"/>
    <property type="match status" value="1"/>
</dbReference>
<dbReference type="PANTHER" id="PTHR11902">
    <property type="entry name" value="ENOLASE"/>
    <property type="match status" value="1"/>
</dbReference>
<dbReference type="PANTHER" id="PTHR11902:SF1">
    <property type="entry name" value="ENOLASE"/>
    <property type="match status" value="1"/>
</dbReference>
<dbReference type="Pfam" id="PF00113">
    <property type="entry name" value="Enolase_C"/>
    <property type="match status" value="1"/>
</dbReference>
<dbReference type="Pfam" id="PF03952">
    <property type="entry name" value="Enolase_N"/>
    <property type="match status" value="1"/>
</dbReference>
<dbReference type="PIRSF" id="PIRSF001400">
    <property type="entry name" value="Enolase"/>
    <property type="match status" value="1"/>
</dbReference>
<dbReference type="PRINTS" id="PR00148">
    <property type="entry name" value="ENOLASE"/>
</dbReference>
<dbReference type="SFLD" id="SFLDF00002">
    <property type="entry name" value="enolase"/>
    <property type="match status" value="1"/>
</dbReference>
<dbReference type="SFLD" id="SFLDG00178">
    <property type="entry name" value="enolase"/>
    <property type="match status" value="1"/>
</dbReference>
<dbReference type="SMART" id="SM01192">
    <property type="entry name" value="Enolase_C"/>
    <property type="match status" value="1"/>
</dbReference>
<dbReference type="SMART" id="SM01193">
    <property type="entry name" value="Enolase_N"/>
    <property type="match status" value="1"/>
</dbReference>
<dbReference type="SUPFAM" id="SSF51604">
    <property type="entry name" value="Enolase C-terminal domain-like"/>
    <property type="match status" value="1"/>
</dbReference>
<dbReference type="SUPFAM" id="SSF54826">
    <property type="entry name" value="Enolase N-terminal domain-like"/>
    <property type="match status" value="1"/>
</dbReference>
<dbReference type="PROSITE" id="PS00164">
    <property type="entry name" value="ENOLASE"/>
    <property type="match status" value="1"/>
</dbReference>
<sequence>MFMSQIVDIRAREILDSRGNPTIEADVILESGVVGRACAPSGASTGSREALELRDGDKSRYLGKGVRTAVQNVNSSIHELLVGQSVFEQKALDEKMIAFDGTENKSKLGANATLAVSLAAAHAAAAEQKLPLFQYIANLRGQTTLTMPVPMMNILNGGAHADNTVDIQEFMIEPVGFTSFAEALRAGAEVFHSLKSVLKKQGLNTAVGDEGGFAPNLRSNEEAITVILQAIEQTGYKAGSDIMLALDCASSEFYKNGQYILEGEGNKSFTSNQFADYLAGLVKQYPIISIEDGLDESDWEGWSYLTSILGDKIQLVGDDLFVTNPKILQRGIDEKVGNSILIKYNQIGTLTETLDAIYLAKANGYTTVISHRSGETEDSTIADLAVGTAAGQIKTGSLCRSDRVSKYNQLLRIEELTKAVYRGKAEFKGLK</sequence>